<feature type="chain" id="PRO_0000167917" description="Small ribosomal subunit protein bS20">
    <location>
        <begin position="1"/>
        <end position="88"/>
    </location>
</feature>
<reference key="1">
    <citation type="journal article" date="2004" name="J. Mol. Microbiol. Biotechnol.">
        <title>The complete genome sequence of Bacillus licheniformis DSM13, an organism with great industrial potential.</title>
        <authorList>
            <person name="Veith B."/>
            <person name="Herzberg C."/>
            <person name="Steckel S."/>
            <person name="Feesche J."/>
            <person name="Maurer K.H."/>
            <person name="Ehrenreich P."/>
            <person name="Baeumer S."/>
            <person name="Henne A."/>
            <person name="Liesegang H."/>
            <person name="Merkl R."/>
            <person name="Ehrenreich A."/>
            <person name="Gottschalk G."/>
        </authorList>
    </citation>
    <scope>NUCLEOTIDE SEQUENCE [LARGE SCALE GENOMIC DNA]</scope>
    <source>
        <strain>ATCC 14580 / DSM 13 / JCM 2505 / CCUG 7422 / NBRC 12200 / NCIMB 9375 / NCTC 10341 / NRRL NRS-1264 / Gibson 46</strain>
    </source>
</reference>
<reference key="2">
    <citation type="journal article" date="2004" name="Genome Biol.">
        <title>Complete genome sequence of the industrial bacterium Bacillus licheniformis and comparisons with closely related Bacillus species.</title>
        <authorList>
            <person name="Rey M.W."/>
            <person name="Ramaiya P."/>
            <person name="Nelson B.A."/>
            <person name="Brody-Karpin S.D."/>
            <person name="Zaretsky E.J."/>
            <person name="Tang M."/>
            <person name="Lopez de Leon A."/>
            <person name="Xiang H."/>
            <person name="Gusti V."/>
            <person name="Clausen I.G."/>
            <person name="Olsen P.B."/>
            <person name="Rasmussen M.D."/>
            <person name="Andersen J.T."/>
            <person name="Joergensen P.L."/>
            <person name="Larsen T.S."/>
            <person name="Sorokin A."/>
            <person name="Bolotin A."/>
            <person name="Lapidus A."/>
            <person name="Galleron N."/>
            <person name="Ehrlich S.D."/>
            <person name="Berka R.M."/>
        </authorList>
    </citation>
    <scope>NUCLEOTIDE SEQUENCE [LARGE SCALE GENOMIC DNA]</scope>
    <source>
        <strain>ATCC 14580 / DSM 13 / JCM 2505 / CCUG 7422 / NBRC 12200 / NCIMB 9375 / NCTC 10341 / NRRL NRS-1264 / Gibson 46</strain>
    </source>
</reference>
<proteinExistence type="inferred from homology"/>
<keyword id="KW-1185">Reference proteome</keyword>
<keyword id="KW-0687">Ribonucleoprotein</keyword>
<keyword id="KW-0689">Ribosomal protein</keyword>
<keyword id="KW-0694">RNA-binding</keyword>
<keyword id="KW-0699">rRNA-binding</keyword>
<name>RS20_BACLD</name>
<gene>
    <name evidence="1" type="primary">rpsT</name>
    <name type="ordered locus">BLi02747</name>
    <name type="ordered locus">BL02113</name>
</gene>
<accession>Q65H46</accession>
<accession>Q62SK2</accession>
<organism>
    <name type="scientific">Bacillus licheniformis (strain ATCC 14580 / DSM 13 / JCM 2505 / CCUG 7422 / NBRC 12200 / NCIMB 9375 / NCTC 10341 / NRRL NRS-1264 / Gibson 46)</name>
    <dbReference type="NCBI Taxonomy" id="279010"/>
    <lineage>
        <taxon>Bacteria</taxon>
        <taxon>Bacillati</taxon>
        <taxon>Bacillota</taxon>
        <taxon>Bacilli</taxon>
        <taxon>Bacillales</taxon>
        <taxon>Bacillaceae</taxon>
        <taxon>Bacillus</taxon>
    </lineage>
</organism>
<comment type="function">
    <text evidence="1">Binds directly to 16S ribosomal RNA.</text>
</comment>
<comment type="similarity">
    <text evidence="1">Belongs to the bacterial ribosomal protein bS20 family.</text>
</comment>
<protein>
    <recommendedName>
        <fullName evidence="1">Small ribosomal subunit protein bS20</fullName>
    </recommendedName>
    <alternativeName>
        <fullName evidence="2">30S ribosomal protein S20</fullName>
    </alternativeName>
</protein>
<evidence type="ECO:0000255" key="1">
    <source>
        <dbReference type="HAMAP-Rule" id="MF_00500"/>
    </source>
</evidence>
<evidence type="ECO:0000305" key="2"/>
<dbReference type="EMBL" id="AE017333">
    <property type="protein sequence ID" value="AAU41618.1"/>
    <property type="molecule type" value="Genomic_DNA"/>
</dbReference>
<dbReference type="EMBL" id="CP000002">
    <property type="protein sequence ID" value="AAU24257.1"/>
    <property type="molecule type" value="Genomic_DNA"/>
</dbReference>
<dbReference type="RefSeq" id="WP_003183682.1">
    <property type="nucleotide sequence ID" value="NC_006322.1"/>
</dbReference>
<dbReference type="SMR" id="Q65H46"/>
<dbReference type="STRING" id="279010.BL02113"/>
<dbReference type="GeneID" id="92860662"/>
<dbReference type="KEGG" id="bld:BLi02747"/>
<dbReference type="KEGG" id="bli:BL02113"/>
<dbReference type="eggNOG" id="COG0268">
    <property type="taxonomic scope" value="Bacteria"/>
</dbReference>
<dbReference type="HOGENOM" id="CLU_160655_1_0_9"/>
<dbReference type="Proteomes" id="UP000000606">
    <property type="component" value="Chromosome"/>
</dbReference>
<dbReference type="GO" id="GO:0005829">
    <property type="term" value="C:cytosol"/>
    <property type="evidence" value="ECO:0007669"/>
    <property type="project" value="TreeGrafter"/>
</dbReference>
<dbReference type="GO" id="GO:0015935">
    <property type="term" value="C:small ribosomal subunit"/>
    <property type="evidence" value="ECO:0007669"/>
    <property type="project" value="TreeGrafter"/>
</dbReference>
<dbReference type="GO" id="GO:0070181">
    <property type="term" value="F:small ribosomal subunit rRNA binding"/>
    <property type="evidence" value="ECO:0007669"/>
    <property type="project" value="TreeGrafter"/>
</dbReference>
<dbReference type="GO" id="GO:0003735">
    <property type="term" value="F:structural constituent of ribosome"/>
    <property type="evidence" value="ECO:0007669"/>
    <property type="project" value="InterPro"/>
</dbReference>
<dbReference type="GO" id="GO:0006412">
    <property type="term" value="P:translation"/>
    <property type="evidence" value="ECO:0007669"/>
    <property type="project" value="UniProtKB-UniRule"/>
</dbReference>
<dbReference type="FunFam" id="1.20.58.110:FF:000001">
    <property type="entry name" value="30S ribosomal protein S20"/>
    <property type="match status" value="1"/>
</dbReference>
<dbReference type="Gene3D" id="1.20.58.110">
    <property type="entry name" value="Ribosomal protein S20"/>
    <property type="match status" value="1"/>
</dbReference>
<dbReference type="HAMAP" id="MF_00500">
    <property type="entry name" value="Ribosomal_bS20"/>
    <property type="match status" value="1"/>
</dbReference>
<dbReference type="InterPro" id="IPR002583">
    <property type="entry name" value="Ribosomal_bS20"/>
</dbReference>
<dbReference type="InterPro" id="IPR036510">
    <property type="entry name" value="Ribosomal_bS20_sf"/>
</dbReference>
<dbReference type="NCBIfam" id="TIGR00029">
    <property type="entry name" value="S20"/>
    <property type="match status" value="1"/>
</dbReference>
<dbReference type="PANTHER" id="PTHR33398">
    <property type="entry name" value="30S RIBOSOMAL PROTEIN S20"/>
    <property type="match status" value="1"/>
</dbReference>
<dbReference type="PANTHER" id="PTHR33398:SF1">
    <property type="entry name" value="SMALL RIBOSOMAL SUBUNIT PROTEIN BS20C"/>
    <property type="match status" value="1"/>
</dbReference>
<dbReference type="Pfam" id="PF01649">
    <property type="entry name" value="Ribosomal_S20p"/>
    <property type="match status" value="1"/>
</dbReference>
<dbReference type="SUPFAM" id="SSF46992">
    <property type="entry name" value="Ribosomal protein S20"/>
    <property type="match status" value="1"/>
</dbReference>
<sequence length="88" mass="9522">MPNIKSAIKRTKTNNERRAHNATIKSAMRTAMKQVETFVSNNEADKAKAALSAAAKKIDKAAKKGLVHKNTAARYKSNLAKKVNGLSA</sequence>